<name>RS14_STAS1</name>
<evidence type="ECO:0000255" key="1">
    <source>
        <dbReference type="HAMAP-Rule" id="MF_00537"/>
    </source>
</evidence>
<evidence type="ECO:0000305" key="2"/>
<gene>
    <name evidence="1" type="primary">rpsN</name>
    <name type="synonym">rpsN2</name>
    <name type="ordered locus">SSP1421</name>
</gene>
<dbReference type="EMBL" id="AP008934">
    <property type="protein sequence ID" value="BAE18566.1"/>
    <property type="molecule type" value="Genomic_DNA"/>
</dbReference>
<dbReference type="RefSeq" id="WP_011303193.1">
    <property type="nucleotide sequence ID" value="NZ_MTGA01000038.1"/>
</dbReference>
<dbReference type="SMR" id="Q49XD1"/>
<dbReference type="GeneID" id="3615360"/>
<dbReference type="KEGG" id="ssp:SSP1421"/>
<dbReference type="PATRIC" id="fig|342451.11.peg.1425"/>
<dbReference type="eggNOG" id="COG0199">
    <property type="taxonomic scope" value="Bacteria"/>
</dbReference>
<dbReference type="HOGENOM" id="CLU_139869_0_0_9"/>
<dbReference type="OrthoDB" id="9810484at2"/>
<dbReference type="Proteomes" id="UP000006371">
    <property type="component" value="Chromosome"/>
</dbReference>
<dbReference type="GO" id="GO:0005737">
    <property type="term" value="C:cytoplasm"/>
    <property type="evidence" value="ECO:0007669"/>
    <property type="project" value="UniProtKB-ARBA"/>
</dbReference>
<dbReference type="GO" id="GO:0015935">
    <property type="term" value="C:small ribosomal subunit"/>
    <property type="evidence" value="ECO:0007669"/>
    <property type="project" value="TreeGrafter"/>
</dbReference>
<dbReference type="GO" id="GO:0019843">
    <property type="term" value="F:rRNA binding"/>
    <property type="evidence" value="ECO:0007669"/>
    <property type="project" value="UniProtKB-UniRule"/>
</dbReference>
<dbReference type="GO" id="GO:0003735">
    <property type="term" value="F:structural constituent of ribosome"/>
    <property type="evidence" value="ECO:0007669"/>
    <property type="project" value="InterPro"/>
</dbReference>
<dbReference type="GO" id="GO:0006412">
    <property type="term" value="P:translation"/>
    <property type="evidence" value="ECO:0007669"/>
    <property type="project" value="UniProtKB-UniRule"/>
</dbReference>
<dbReference type="FunFam" id="4.10.830.10:FF:000003">
    <property type="entry name" value="30S ribosomal protein S14"/>
    <property type="match status" value="1"/>
</dbReference>
<dbReference type="Gene3D" id="4.10.830.10">
    <property type="entry name" value="30s Ribosomal Protein S14, Chain N"/>
    <property type="match status" value="1"/>
</dbReference>
<dbReference type="HAMAP" id="MF_00537">
    <property type="entry name" value="Ribosomal_uS14_1"/>
    <property type="match status" value="1"/>
</dbReference>
<dbReference type="InterPro" id="IPR001209">
    <property type="entry name" value="Ribosomal_uS14"/>
</dbReference>
<dbReference type="InterPro" id="IPR023036">
    <property type="entry name" value="Ribosomal_uS14_bac/plastid"/>
</dbReference>
<dbReference type="InterPro" id="IPR018271">
    <property type="entry name" value="Ribosomal_uS14_CS"/>
</dbReference>
<dbReference type="InterPro" id="IPR043140">
    <property type="entry name" value="Ribosomal_uS14_sf"/>
</dbReference>
<dbReference type="NCBIfam" id="NF006477">
    <property type="entry name" value="PRK08881.1"/>
    <property type="match status" value="1"/>
</dbReference>
<dbReference type="PANTHER" id="PTHR19836">
    <property type="entry name" value="30S RIBOSOMAL PROTEIN S14"/>
    <property type="match status" value="1"/>
</dbReference>
<dbReference type="PANTHER" id="PTHR19836:SF19">
    <property type="entry name" value="SMALL RIBOSOMAL SUBUNIT PROTEIN US14M"/>
    <property type="match status" value="1"/>
</dbReference>
<dbReference type="Pfam" id="PF00253">
    <property type="entry name" value="Ribosomal_S14"/>
    <property type="match status" value="1"/>
</dbReference>
<dbReference type="SUPFAM" id="SSF57716">
    <property type="entry name" value="Glucocorticoid receptor-like (DNA-binding domain)"/>
    <property type="match status" value="1"/>
</dbReference>
<dbReference type="PROSITE" id="PS00527">
    <property type="entry name" value="RIBOSOMAL_S14"/>
    <property type="match status" value="1"/>
</dbReference>
<sequence>MAKKSKIAKEQKREKLVAQYYELRKELKDKGDYEALRKLPRDSSPTRLTRRCKVTGRPRGVYRKFGMSRIALRDYAHKGQIPGVKKSSW</sequence>
<organism>
    <name type="scientific">Staphylococcus saprophyticus subsp. saprophyticus (strain ATCC 15305 / DSM 20229 / NCIMB 8711 / NCTC 7292 / S-41)</name>
    <dbReference type="NCBI Taxonomy" id="342451"/>
    <lineage>
        <taxon>Bacteria</taxon>
        <taxon>Bacillati</taxon>
        <taxon>Bacillota</taxon>
        <taxon>Bacilli</taxon>
        <taxon>Bacillales</taxon>
        <taxon>Staphylococcaceae</taxon>
        <taxon>Staphylococcus</taxon>
    </lineage>
</organism>
<protein>
    <recommendedName>
        <fullName evidence="1">Small ribosomal subunit protein uS14A</fullName>
    </recommendedName>
    <alternativeName>
        <fullName evidence="2">30S ribosomal protein S14</fullName>
    </alternativeName>
</protein>
<proteinExistence type="inferred from homology"/>
<keyword id="KW-1185">Reference proteome</keyword>
<keyword id="KW-0687">Ribonucleoprotein</keyword>
<keyword id="KW-0689">Ribosomal protein</keyword>
<keyword id="KW-0694">RNA-binding</keyword>
<keyword id="KW-0699">rRNA-binding</keyword>
<comment type="function">
    <text evidence="1">Binds 16S rRNA, required for the assembly of 30S particles and may also be responsible for determining the conformation of the 16S rRNA at the A site.</text>
</comment>
<comment type="subunit">
    <text evidence="1">Part of the 30S ribosomal subunit. Contacts proteins S3 and S10.</text>
</comment>
<comment type="similarity">
    <text evidence="1">Belongs to the universal ribosomal protein uS14 family.</text>
</comment>
<reference key="1">
    <citation type="journal article" date="2005" name="Proc. Natl. Acad. Sci. U.S.A.">
        <title>Whole genome sequence of Staphylococcus saprophyticus reveals the pathogenesis of uncomplicated urinary tract infection.</title>
        <authorList>
            <person name="Kuroda M."/>
            <person name="Yamashita A."/>
            <person name="Hirakawa H."/>
            <person name="Kumano M."/>
            <person name="Morikawa K."/>
            <person name="Higashide M."/>
            <person name="Maruyama A."/>
            <person name="Inose Y."/>
            <person name="Matoba K."/>
            <person name="Toh H."/>
            <person name="Kuhara S."/>
            <person name="Hattori M."/>
            <person name="Ohta T."/>
        </authorList>
    </citation>
    <scope>NUCLEOTIDE SEQUENCE [LARGE SCALE GENOMIC DNA]</scope>
    <source>
        <strain>ATCC 15305 / DSM 20229 / NCIMB 8711 / NCTC 7292 / S-41</strain>
    </source>
</reference>
<feature type="chain" id="PRO_0000269066" description="Small ribosomal subunit protein uS14A">
    <location>
        <begin position="1"/>
        <end position="89"/>
    </location>
</feature>
<accession>Q49XD1</accession>